<proteinExistence type="inferred from homology"/>
<sequence length="969" mass="106886">MTESPTTSPATGSGAAAPDSDAPPYRYTAALAGRIEGSWQDTWAKLGTFNVPNPVGSLAPTDGTPVPEDKLFVQDMFPYPSGEGLHVGHPLGYIATDVYARYFRMTGRNVLHALGFDAFGLPAEQYAVQTGTHPRTRTEANVVNFRRQLGRLGLGHDSRRSFSTTDVEFYKWTQWIFLQIYNAWFDPAANKARPIAELVAEFDSGARSLDDGRNWSELSAGERADVIDSHRLVYRADSMVNWCPGLGTVLANEEVTADGRSDRGNFPVFRKRLRQWMMRITAYSDRLLDDLDLLDWPEPVKTMQRNWIGRSTGAKALFAATGADGAALDIEVFTTRPDTLFGATYMVLAPEHELVDELVAPAWPDGTDPRWTYGAATPGEAVAAYRRAIASKSDLERQESKAKTGVFLGSYATNPTNGKPVPIFIADYVLAGYGTGAIMAVPGHDQRDWDFAHEFGLPIVEVIAGGDISEGAYAGDGLLVNSGYLDGLDVAAAKEAITARLEAEGRGCARVEFKLRDWLFARQRYWGEPFPIVYDSDGRPHALDEAALPVELPDVPDYSPVLFDPDDADSEPSPPLAKATDWVHVELDLGDGLKPYSRDTNVMPQWAGSSWYELRYTDPHNSERFCAKENEAYWMGPRPAEHGPQDPGGVDLYVGGAEHAVLHLLYARFWHKVLYDLGHVSSREPYRRLVNQGYIQAFAYTDSRGSYVPAEEVVERDGRFFYRGPDGEIEVFQEFGKIGKSLKNSISPDEICDDYGADTLRVYEMSMGPLEASRPWATKDVVGAHRFLQRVWRLVVDEQTGETRVVDGAGRDLPTGTLRLLHRTIAGVSEDYAGLRNNTAVAKLIEYTNHLTKEHRDAVPRAAVEPLVLMLAPLAPHMAEELWLRLGHTTSLAHGPFPVADPAYLVEDTVEYPVQVNGKVRGRVTVAADADRDTLEAAALADEKVLAFLAGAQPRKVIVVPGRLVNLVV</sequence>
<name>SYL_MYCA1</name>
<evidence type="ECO:0000255" key="1">
    <source>
        <dbReference type="HAMAP-Rule" id="MF_00049"/>
    </source>
</evidence>
<evidence type="ECO:0000256" key="2">
    <source>
        <dbReference type="SAM" id="MobiDB-lite"/>
    </source>
</evidence>
<evidence type="ECO:0000305" key="3"/>
<accession>A0Q8W7</accession>
<protein>
    <recommendedName>
        <fullName evidence="1">Leucine--tRNA ligase</fullName>
        <ecNumber evidence="1">6.1.1.4</ecNumber>
    </recommendedName>
    <alternativeName>
        <fullName evidence="1">Leucyl-tRNA synthetase</fullName>
        <shortName evidence="1">LeuRS</shortName>
    </alternativeName>
</protein>
<reference key="1">
    <citation type="submission" date="2006-10" db="EMBL/GenBank/DDBJ databases">
        <authorList>
            <person name="Fleischmann R.D."/>
            <person name="Dodson R.J."/>
            <person name="Haft D.H."/>
            <person name="Merkel J.S."/>
            <person name="Nelson W.C."/>
            <person name="Fraser C.M."/>
        </authorList>
    </citation>
    <scope>NUCLEOTIDE SEQUENCE [LARGE SCALE GENOMIC DNA]</scope>
    <source>
        <strain>104</strain>
    </source>
</reference>
<keyword id="KW-0030">Aminoacyl-tRNA synthetase</keyword>
<keyword id="KW-0067">ATP-binding</keyword>
<keyword id="KW-0963">Cytoplasm</keyword>
<keyword id="KW-0436">Ligase</keyword>
<keyword id="KW-0547">Nucleotide-binding</keyword>
<keyword id="KW-0648">Protein biosynthesis</keyword>
<gene>
    <name evidence="1" type="primary">leuS</name>
    <name type="ordered locus">MAV_0055</name>
</gene>
<organism>
    <name type="scientific">Mycobacterium avium (strain 104)</name>
    <dbReference type="NCBI Taxonomy" id="243243"/>
    <lineage>
        <taxon>Bacteria</taxon>
        <taxon>Bacillati</taxon>
        <taxon>Actinomycetota</taxon>
        <taxon>Actinomycetes</taxon>
        <taxon>Mycobacteriales</taxon>
        <taxon>Mycobacteriaceae</taxon>
        <taxon>Mycobacterium</taxon>
        <taxon>Mycobacterium avium complex (MAC)</taxon>
    </lineage>
</organism>
<comment type="catalytic activity">
    <reaction evidence="1">
        <text>tRNA(Leu) + L-leucine + ATP = L-leucyl-tRNA(Leu) + AMP + diphosphate</text>
        <dbReference type="Rhea" id="RHEA:11688"/>
        <dbReference type="Rhea" id="RHEA-COMP:9613"/>
        <dbReference type="Rhea" id="RHEA-COMP:9622"/>
        <dbReference type="ChEBI" id="CHEBI:30616"/>
        <dbReference type="ChEBI" id="CHEBI:33019"/>
        <dbReference type="ChEBI" id="CHEBI:57427"/>
        <dbReference type="ChEBI" id="CHEBI:78442"/>
        <dbReference type="ChEBI" id="CHEBI:78494"/>
        <dbReference type="ChEBI" id="CHEBI:456215"/>
        <dbReference type="EC" id="6.1.1.4"/>
    </reaction>
</comment>
<comment type="subcellular location">
    <subcellularLocation>
        <location evidence="1">Cytoplasm</location>
    </subcellularLocation>
</comment>
<comment type="similarity">
    <text evidence="1">Belongs to the class-I aminoacyl-tRNA synthetase family.</text>
</comment>
<comment type="sequence caution" evidence="3">
    <conflict type="erroneous initiation">
        <sequence resource="EMBL-CDS" id="ABK69297"/>
    </conflict>
</comment>
<dbReference type="EC" id="6.1.1.4" evidence="1"/>
<dbReference type="EMBL" id="CP000479">
    <property type="protein sequence ID" value="ABK69297.1"/>
    <property type="status" value="ALT_INIT"/>
    <property type="molecule type" value="Genomic_DNA"/>
</dbReference>
<dbReference type="RefSeq" id="WP_031344725.1">
    <property type="nucleotide sequence ID" value="NC_008595.1"/>
</dbReference>
<dbReference type="SMR" id="A0Q8W7"/>
<dbReference type="KEGG" id="mav:MAV_0055"/>
<dbReference type="HOGENOM" id="CLU_004427_0_0_11"/>
<dbReference type="Proteomes" id="UP000001574">
    <property type="component" value="Chromosome"/>
</dbReference>
<dbReference type="GO" id="GO:0005829">
    <property type="term" value="C:cytosol"/>
    <property type="evidence" value="ECO:0007669"/>
    <property type="project" value="TreeGrafter"/>
</dbReference>
<dbReference type="GO" id="GO:0002161">
    <property type="term" value="F:aminoacyl-tRNA deacylase activity"/>
    <property type="evidence" value="ECO:0007669"/>
    <property type="project" value="InterPro"/>
</dbReference>
<dbReference type="GO" id="GO:0005524">
    <property type="term" value="F:ATP binding"/>
    <property type="evidence" value="ECO:0007669"/>
    <property type="project" value="UniProtKB-UniRule"/>
</dbReference>
<dbReference type="GO" id="GO:0004823">
    <property type="term" value="F:leucine-tRNA ligase activity"/>
    <property type="evidence" value="ECO:0007669"/>
    <property type="project" value="UniProtKB-UniRule"/>
</dbReference>
<dbReference type="GO" id="GO:0006429">
    <property type="term" value="P:leucyl-tRNA aminoacylation"/>
    <property type="evidence" value="ECO:0007669"/>
    <property type="project" value="UniProtKB-UniRule"/>
</dbReference>
<dbReference type="CDD" id="cd07958">
    <property type="entry name" value="Anticodon_Ia_Leu_BEm"/>
    <property type="match status" value="1"/>
</dbReference>
<dbReference type="FunFam" id="3.10.20.590:FF:000001">
    <property type="entry name" value="Leucine--tRNA ligase"/>
    <property type="match status" value="1"/>
</dbReference>
<dbReference type="FunFam" id="3.40.50.620:FF:000060">
    <property type="entry name" value="Leucine--tRNA ligase"/>
    <property type="match status" value="1"/>
</dbReference>
<dbReference type="FunFam" id="3.40.50.620:FF:000087">
    <property type="entry name" value="Leucine--tRNA ligase"/>
    <property type="match status" value="1"/>
</dbReference>
<dbReference type="FunFam" id="3.90.740.10:FF:000017">
    <property type="entry name" value="Leucine--tRNA ligase"/>
    <property type="match status" value="1"/>
</dbReference>
<dbReference type="FunFam" id="1.10.730.10:FF:000011">
    <property type="entry name" value="Leucine--tRNA ligase chloroplastic/mitochondrial"/>
    <property type="match status" value="1"/>
</dbReference>
<dbReference type="Gene3D" id="3.40.50.620">
    <property type="entry name" value="HUPs"/>
    <property type="match status" value="3"/>
</dbReference>
<dbReference type="Gene3D" id="1.10.730.10">
    <property type="entry name" value="Isoleucyl-tRNA Synthetase, Domain 1"/>
    <property type="match status" value="1"/>
</dbReference>
<dbReference type="Gene3D" id="3.90.740.10">
    <property type="entry name" value="Valyl/Leucyl/Isoleucyl-tRNA synthetase, editing domain"/>
    <property type="match status" value="1"/>
</dbReference>
<dbReference type="HAMAP" id="MF_00049_B">
    <property type="entry name" value="Leu_tRNA_synth_B"/>
    <property type="match status" value="1"/>
</dbReference>
<dbReference type="InterPro" id="IPR001412">
    <property type="entry name" value="aa-tRNA-synth_I_CS"/>
</dbReference>
<dbReference type="InterPro" id="IPR002302">
    <property type="entry name" value="Leu-tRNA-ligase"/>
</dbReference>
<dbReference type="InterPro" id="IPR025709">
    <property type="entry name" value="Leu_tRNA-synth_edit"/>
</dbReference>
<dbReference type="InterPro" id="IPR013155">
    <property type="entry name" value="M/V/L/I-tRNA-synth_anticd-bd"/>
</dbReference>
<dbReference type="InterPro" id="IPR015413">
    <property type="entry name" value="Methionyl/Leucyl_tRNA_Synth"/>
</dbReference>
<dbReference type="InterPro" id="IPR014729">
    <property type="entry name" value="Rossmann-like_a/b/a_fold"/>
</dbReference>
<dbReference type="InterPro" id="IPR009080">
    <property type="entry name" value="tRNAsynth_Ia_anticodon-bd"/>
</dbReference>
<dbReference type="InterPro" id="IPR009008">
    <property type="entry name" value="Val/Leu/Ile-tRNA-synth_edit"/>
</dbReference>
<dbReference type="NCBIfam" id="TIGR00396">
    <property type="entry name" value="leuS_bact"/>
    <property type="match status" value="1"/>
</dbReference>
<dbReference type="PANTHER" id="PTHR43740:SF2">
    <property type="entry name" value="LEUCINE--TRNA LIGASE, MITOCHONDRIAL"/>
    <property type="match status" value="1"/>
</dbReference>
<dbReference type="PANTHER" id="PTHR43740">
    <property type="entry name" value="LEUCYL-TRNA SYNTHETASE"/>
    <property type="match status" value="1"/>
</dbReference>
<dbReference type="Pfam" id="PF08264">
    <property type="entry name" value="Anticodon_1"/>
    <property type="match status" value="1"/>
</dbReference>
<dbReference type="Pfam" id="PF13603">
    <property type="entry name" value="tRNA-synt_1_2"/>
    <property type="match status" value="1"/>
</dbReference>
<dbReference type="Pfam" id="PF09334">
    <property type="entry name" value="tRNA-synt_1g"/>
    <property type="match status" value="1"/>
</dbReference>
<dbReference type="PRINTS" id="PR00985">
    <property type="entry name" value="TRNASYNTHLEU"/>
</dbReference>
<dbReference type="SUPFAM" id="SSF47323">
    <property type="entry name" value="Anticodon-binding domain of a subclass of class I aminoacyl-tRNA synthetases"/>
    <property type="match status" value="1"/>
</dbReference>
<dbReference type="SUPFAM" id="SSF52374">
    <property type="entry name" value="Nucleotidylyl transferase"/>
    <property type="match status" value="1"/>
</dbReference>
<dbReference type="SUPFAM" id="SSF50677">
    <property type="entry name" value="ValRS/IleRS/LeuRS editing domain"/>
    <property type="match status" value="1"/>
</dbReference>
<dbReference type="PROSITE" id="PS00178">
    <property type="entry name" value="AA_TRNA_LIGASE_I"/>
    <property type="match status" value="1"/>
</dbReference>
<feature type="chain" id="PRO_0000334773" description="Leucine--tRNA ligase">
    <location>
        <begin position="1"/>
        <end position="969"/>
    </location>
</feature>
<feature type="region of interest" description="Disordered" evidence="2">
    <location>
        <begin position="1"/>
        <end position="23"/>
    </location>
</feature>
<feature type="short sequence motif" description="'HIGH' region">
    <location>
        <begin position="78"/>
        <end position="89"/>
    </location>
</feature>
<feature type="short sequence motif" description="'KMSKS' region">
    <location>
        <begin position="737"/>
        <end position="741"/>
    </location>
</feature>
<feature type="binding site" evidence="1">
    <location>
        <position position="740"/>
    </location>
    <ligand>
        <name>ATP</name>
        <dbReference type="ChEBI" id="CHEBI:30616"/>
    </ligand>
</feature>